<proteinExistence type="evidence at protein level"/>
<dbReference type="EMBL" id="AM113514">
    <property type="protein sequence ID" value="CAJ34610.1"/>
    <property type="molecule type" value="mRNA"/>
</dbReference>
<dbReference type="GO" id="GO:0005576">
    <property type="term" value="C:extracellular region"/>
    <property type="evidence" value="ECO:0007669"/>
    <property type="project" value="UniProtKB-SubCell"/>
</dbReference>
<dbReference type="GO" id="GO:0050829">
    <property type="term" value="P:defense response to Gram-negative bacterium"/>
    <property type="evidence" value="ECO:0007669"/>
    <property type="project" value="UniProtKB-ARBA"/>
</dbReference>
<dbReference type="GO" id="GO:0050830">
    <property type="term" value="P:defense response to Gram-positive bacterium"/>
    <property type="evidence" value="ECO:0007669"/>
    <property type="project" value="UniProtKB-ARBA"/>
</dbReference>
<dbReference type="InterPro" id="IPR012521">
    <property type="entry name" value="Antimicrobial_frog_2"/>
</dbReference>
<dbReference type="InterPro" id="IPR004275">
    <property type="entry name" value="Frog_antimicrobial_propeptide"/>
</dbReference>
<dbReference type="Pfam" id="PF08023">
    <property type="entry name" value="Antimicrobial_2"/>
    <property type="match status" value="1"/>
</dbReference>
<dbReference type="Pfam" id="PF03032">
    <property type="entry name" value="FSAP_sig_propep"/>
    <property type="match status" value="1"/>
</dbReference>
<accession>Q1JS87</accession>
<feature type="signal peptide" evidence="2">
    <location>
        <begin position="1"/>
        <end position="22"/>
    </location>
</feature>
<feature type="propeptide" id="PRO_0000268211">
    <location>
        <begin position="23"/>
        <end position="36"/>
    </location>
</feature>
<feature type="peptide" id="PRO_0000268212" description="Esculentin-1Vb">
    <location>
        <begin position="39"/>
        <end position="84"/>
    </location>
</feature>
<feature type="disulfide bond">
    <location>
        <begin position="78"/>
        <end position="84"/>
    </location>
</feature>
<evidence type="ECO:0000250" key="1"/>
<evidence type="ECO:0000255" key="2"/>
<evidence type="ECO:0000269" key="3">
    <source>
    </source>
</evidence>
<evidence type="ECO:0000303" key="4">
    <source>
    </source>
</evidence>
<evidence type="ECO:0000305" key="5"/>
<evidence type="ECO:0000305" key="6">
    <source>
    </source>
</evidence>
<evidence type="ECO:0000312" key="7">
    <source>
        <dbReference type="EMBL" id="CAJ34610.1"/>
    </source>
</evidence>
<sequence>MFTLKKPLLLIVLLGIISLSLCEQERNADEDEESETKRGIFTKINKKKAKTGVFNIIKTIGKEAGMDVIRAGIDTISCKIKGEC</sequence>
<protein>
    <recommendedName>
        <fullName evidence="7">Esculentin-1Vb</fullName>
        <shortName evidence="7">esc1Vb</shortName>
    </recommendedName>
    <alternativeName>
        <fullName evidence="4">Esculentin 1VEb</fullName>
    </alternativeName>
</protein>
<keyword id="KW-0878">Amphibian defense peptide</keyword>
<keyword id="KW-0044">Antibiotic</keyword>
<keyword id="KW-0929">Antimicrobial</keyword>
<keyword id="KW-0165">Cleavage on pair of basic residues</keyword>
<keyword id="KW-1015">Disulfide bond</keyword>
<keyword id="KW-0964">Secreted</keyword>
<keyword id="KW-0732">Signal</keyword>
<reference key="1">
    <citation type="journal article" date="2006" name="Peptides">
        <title>The Chinese bamboo leaf odorous frog (Rana (odorrana) versabilis) and north american rana frogs share the same families of skin antimicrobial peptides.</title>
        <authorList>
            <person name="Chen T."/>
            <person name="Zhou M."/>
            <person name="Rao P."/>
            <person name="Walker B."/>
            <person name="Shaw C."/>
        </authorList>
    </citation>
    <scope>NUCLEOTIDE SEQUENCE [MRNA]</scope>
    <scope>MASS SPECTROMETRY</scope>
    <scope>SUBCELLULAR LOCATION</scope>
    <source>
        <tissue>Skin secretion</tissue>
    </source>
</reference>
<name>ES1VB_ODOVE</name>
<comment type="function">
    <text evidence="1">Antimicrobial peptide.</text>
</comment>
<comment type="subcellular location">
    <subcellularLocation>
        <location evidence="3">Secreted</location>
    </subcellularLocation>
</comment>
<comment type="tissue specificity">
    <text evidence="6">Expressed by the skin glands.</text>
</comment>
<comment type="mass spectrometry"/>
<comment type="similarity">
    <text evidence="5">Belongs to the frog skin active peptide (FSAP) family. Esculentin subfamily.</text>
</comment>
<comment type="online information" name="The antimicrobial peptide database">
    <link uri="https://wangapd3.com/database/query_output.php?ID=00650"/>
</comment>
<organism>
    <name type="scientific">Odorrana versabilis</name>
    <name type="common">Chinese bamboo leaf odorous frog</name>
    <name type="synonym">Rana versabilis</name>
    <dbReference type="NCBI Taxonomy" id="326940"/>
    <lineage>
        <taxon>Eukaryota</taxon>
        <taxon>Metazoa</taxon>
        <taxon>Chordata</taxon>
        <taxon>Craniata</taxon>
        <taxon>Vertebrata</taxon>
        <taxon>Euteleostomi</taxon>
        <taxon>Amphibia</taxon>
        <taxon>Batrachia</taxon>
        <taxon>Anura</taxon>
        <taxon>Neobatrachia</taxon>
        <taxon>Ranoidea</taxon>
        <taxon>Ranidae</taxon>
        <taxon>Odorrana</taxon>
    </lineage>
</organism>